<organism>
    <name type="scientific">Macaca fascicularis</name>
    <name type="common">Crab-eating macaque</name>
    <name type="synonym">Cynomolgus monkey</name>
    <dbReference type="NCBI Taxonomy" id="9541"/>
    <lineage>
        <taxon>Eukaryota</taxon>
        <taxon>Metazoa</taxon>
        <taxon>Chordata</taxon>
        <taxon>Craniata</taxon>
        <taxon>Vertebrata</taxon>
        <taxon>Euteleostomi</taxon>
        <taxon>Mammalia</taxon>
        <taxon>Eutheria</taxon>
        <taxon>Euarchontoglires</taxon>
        <taxon>Primates</taxon>
        <taxon>Haplorrhini</taxon>
        <taxon>Catarrhini</taxon>
        <taxon>Cercopithecidae</taxon>
        <taxon>Cercopithecinae</taxon>
        <taxon>Macaca</taxon>
    </lineage>
</organism>
<gene>
    <name type="primary">HNRNPF</name>
    <name type="synonym">HNRPF</name>
    <name type="ORF">QflA-17741</name>
    <name type="ORF">QtsA-10715</name>
</gene>
<comment type="function">
    <text evidence="1">Component of the heterogeneous nuclear ribonucleoprotein (hnRNP) complexes which provide the substrate for the processing events that pre-mRNAs undergo before becoming functional, translatable mRNAs in the cytoplasm. Plays a role in the regulation of alternative splicing events. Binds G-rich sequences in pre-mRNAs and keeps target RNA in an unfolded state (By similarity).</text>
</comment>
<comment type="subunit">
    <text evidence="1">Identified in the spliceosome C complex. Interacts with AGO1, AGO2, TBP and TXNL4/DIM1 (By similarity).</text>
</comment>
<comment type="subcellular location">
    <subcellularLocation>
        <location evidence="1">Nucleus</location>
        <location evidence="1">Nucleoplasm</location>
    </subcellularLocation>
</comment>
<comment type="domain">
    <text evidence="1">The N-terminal RRM domains are responsible for recognizing the G-tract of BCL-X RNA.</text>
</comment>
<comment type="PTM">
    <text evidence="1">Sumoylated.</text>
</comment>
<feature type="chain" id="PRO_0000081853" description="Heterogeneous nuclear ribonucleoprotein F">
    <location>
        <begin position="1"/>
        <end position="415"/>
    </location>
</feature>
<feature type="initiator methionine" description="Removed; alternate" evidence="2">
    <location>
        <position position="1"/>
    </location>
</feature>
<feature type="chain" id="PRO_0000367115" description="Heterogeneous nuclear ribonucleoprotein F, N-terminally processed">
    <location>
        <begin position="2"/>
        <end position="415"/>
    </location>
</feature>
<feature type="domain" description="RRM 1" evidence="5">
    <location>
        <begin position="13"/>
        <end position="85"/>
    </location>
</feature>
<feature type="domain" description="RRM 2" evidence="5">
    <location>
        <begin position="111"/>
        <end position="188"/>
    </location>
</feature>
<feature type="domain" description="RRM 3" evidence="5">
    <location>
        <begin position="289"/>
        <end position="366"/>
    </location>
</feature>
<feature type="region of interest" description="Interaction with RNA" evidence="1">
    <location>
        <begin position="81"/>
        <end position="86"/>
    </location>
</feature>
<feature type="region of interest" description="Interaction with RNA" evidence="1">
    <location>
        <begin position="179"/>
        <end position="184"/>
    </location>
</feature>
<feature type="region of interest" description="Interaction with RNA" evidence="1">
    <location>
        <begin position="355"/>
        <end position="360"/>
    </location>
</feature>
<feature type="site" description="Interaction with RNA" evidence="1">
    <location>
        <position position="16"/>
    </location>
</feature>
<feature type="site" description="Interaction with RNA" evidence="1">
    <location>
        <position position="20"/>
    </location>
</feature>
<feature type="site" description="Interaction with RNA" evidence="1">
    <location>
        <position position="52"/>
    </location>
</feature>
<feature type="site" description="Interaction with RNA" evidence="1">
    <location>
        <position position="75"/>
    </location>
</feature>
<feature type="site" description="Interaction with RNA" evidence="1">
    <location>
        <position position="116"/>
    </location>
</feature>
<feature type="site" description="Interaction with RNA" evidence="1">
    <location>
        <position position="120"/>
    </location>
</feature>
<feature type="site" description="Interaction with RNA" evidence="1">
    <location>
        <position position="150"/>
    </location>
</feature>
<feature type="site" description="Interaction with RNA" evidence="1">
    <location>
        <position position="173"/>
    </location>
</feature>
<feature type="site" description="Interaction with RNA" evidence="1">
    <location>
        <position position="294"/>
    </location>
</feature>
<feature type="site" description="Interaction with RNA" evidence="1">
    <location>
        <position position="298"/>
    </location>
</feature>
<feature type="site" description="Interaction with RNA" evidence="1">
    <location>
        <position position="326"/>
    </location>
</feature>
<feature type="site" description="Interaction with RNA" evidence="1">
    <location>
        <position position="349"/>
    </location>
</feature>
<feature type="modified residue" description="N-acetylmethionine" evidence="2">
    <location>
        <position position="1"/>
    </location>
</feature>
<feature type="modified residue" description="N-acetylmethionine; in Heterogeneous nuclear ribonucleoprotein F, N-terminally processed" evidence="2">
    <location>
        <position position="2"/>
    </location>
</feature>
<feature type="modified residue" description="Phosphoserine" evidence="2">
    <location>
        <position position="104"/>
    </location>
</feature>
<feature type="modified residue" description="Phosphoserine" evidence="2">
    <location>
        <position position="107"/>
    </location>
</feature>
<feature type="modified residue" description="Phosphoserine" evidence="2">
    <location>
        <position position="161"/>
    </location>
</feature>
<feature type="modified residue" description="Phosphoserine" evidence="2">
    <location>
        <position position="187"/>
    </location>
</feature>
<feature type="modified residue" description="Phosphoserine" evidence="2">
    <location>
        <position position="193"/>
    </location>
</feature>
<feature type="modified residue" description="Phosphoserine" evidence="3">
    <location>
        <position position="195"/>
    </location>
</feature>
<feature type="modified residue" description="N6-acetyllysine; alternate" evidence="4">
    <location>
        <position position="200"/>
    </location>
</feature>
<feature type="modified residue" description="Phosphothreonine" evidence="2">
    <location>
        <position position="215"/>
    </location>
</feature>
<feature type="modified residue" description="N6-acetyllysine; alternate" evidence="2">
    <location>
        <position position="224"/>
    </location>
</feature>
<feature type="modified residue" description="Phosphoserine" evidence="2">
    <location>
        <position position="265"/>
    </location>
</feature>
<feature type="cross-link" description="Glycyl lysine isopeptide (Lys-Gly) (interchain with G-Cter in SUMO)" evidence="1">
    <location>
        <position position="72"/>
    </location>
</feature>
<feature type="cross-link" description="Glycyl lysine isopeptide (Lys-Gly) (interchain with G-Cter in SUMO2)" evidence="2">
    <location>
        <position position="87"/>
    </location>
</feature>
<feature type="cross-link" description="Glycyl lysine isopeptide (Lys-Gly) (interchain with G-Cter in SUMO2)" evidence="2">
    <location>
        <position position="167"/>
    </location>
</feature>
<feature type="cross-link" description="Glycyl lysine isopeptide (Lys-Gly) (interchain with G-Cter in SUMO2)" evidence="2">
    <location>
        <position position="185"/>
    </location>
</feature>
<feature type="cross-link" description="Glycyl lysine isopeptide (Lys-Gly) (interchain with G-Cter in SUMO2); alternate" evidence="2">
    <location>
        <position position="200"/>
    </location>
</feature>
<feature type="cross-link" description="Glycyl lysine isopeptide (Lys-Gly) (interchain with G-Cter in SUMO2); alternate" evidence="2">
    <location>
        <position position="224"/>
    </location>
</feature>
<feature type="sequence conflict" description="In Ref. 2; BAE00371." evidence="6" ref="2">
    <original>S</original>
    <variation>G</variation>
    <location>
        <position position="234"/>
    </location>
</feature>
<feature type="sequence conflict" description="In Ref. 2; BAE00371." evidence="6" ref="2">
    <original>S</original>
    <variation>A</variation>
    <location>
        <position position="384"/>
    </location>
</feature>
<evidence type="ECO:0000250" key="1"/>
<evidence type="ECO:0000250" key="2">
    <source>
        <dbReference type="UniProtKB" id="P52597"/>
    </source>
</evidence>
<evidence type="ECO:0000250" key="3">
    <source>
        <dbReference type="UniProtKB" id="Q794E4"/>
    </source>
</evidence>
<evidence type="ECO:0000250" key="4">
    <source>
        <dbReference type="UniProtKB" id="Q9Z2X1"/>
    </source>
</evidence>
<evidence type="ECO:0000255" key="5">
    <source>
        <dbReference type="PROSITE-ProRule" id="PRU00176"/>
    </source>
</evidence>
<evidence type="ECO:0000305" key="6"/>
<keyword id="KW-0007">Acetylation</keyword>
<keyword id="KW-1017">Isopeptide bond</keyword>
<keyword id="KW-0507">mRNA processing</keyword>
<keyword id="KW-0508">mRNA splicing</keyword>
<keyword id="KW-0539">Nucleus</keyword>
<keyword id="KW-0597">Phosphoprotein</keyword>
<keyword id="KW-1185">Reference proteome</keyword>
<keyword id="KW-0677">Repeat</keyword>
<keyword id="KW-0687">Ribonucleoprotein</keyword>
<keyword id="KW-0694">RNA-binding</keyword>
<keyword id="KW-0747">Spliceosome</keyword>
<keyword id="KW-0832">Ubl conjugation</keyword>
<accession>Q60HC3</accession>
<accession>Q4R950</accession>
<protein>
    <recommendedName>
        <fullName>Heterogeneous nuclear ribonucleoprotein F</fullName>
        <shortName>hnRNP F</shortName>
    </recommendedName>
    <component>
        <recommendedName>
            <fullName>Heterogeneous nuclear ribonucleoprotein F, N-terminally processed</fullName>
        </recommendedName>
    </component>
</protein>
<proteinExistence type="evidence at transcript level"/>
<name>HNRPF_MACFA</name>
<sequence length="415" mass="45718">MMLGPEGGEGFVVKLRGLPWSCSVEDVQNFLSDCTIHDGAAGVHFIYTREGRQSGEAFVELGSEDDVKMALKKDRESMGHRYIEVFKSHRTEMDWVLKHSGPNSADSANDGFVRLRGLPFGCTKEEIVQFFSGLEIVPNGITLPVDPEGKITGEAFVQFASQELAEKALGKHKERIGHRYIEVFKSSQEEVRSYSDPPLKFMSVQRPGPYDRPGTARRYIGIVKQAGLERMRPSAYSTGYGGYEEYSGLSDGYGFTTDLFGRDLSYCLSGMYDHRYGDSEFTVQSTTGHCVHMRGLPYKATENDIYNFFSPLNPVRVHIEIGPDGRVTGEADVEFATHEEAVAAMSKDRANMQHRYIELFLNSTTGASNGAYSSQVMQGMGVSSAQATYSGLESQSVSGCYGAGYSGQNSMGGYD</sequence>
<reference key="1">
    <citation type="submission" date="2003-10" db="EMBL/GenBank/DDBJ databases">
        <title>Isolation and characterization of cDNA for macaque neurological disease genes.</title>
        <authorList>
            <person name="Kusuda J."/>
            <person name="Osada N."/>
            <person name="Tanuma R."/>
            <person name="Hirata M."/>
            <person name="Sugano S."/>
            <person name="Hashimoto K."/>
        </authorList>
    </citation>
    <scope>NUCLEOTIDE SEQUENCE [LARGE SCALE MRNA]</scope>
    <source>
        <tissue>Frontal cortex</tissue>
    </source>
</reference>
<reference key="2">
    <citation type="submission" date="2005-06" db="EMBL/GenBank/DDBJ databases">
        <title>DNA sequences of macaque genes expressed in brain or testis and its evolutionary implications.</title>
        <authorList>
            <consortium name="International consortium for macaque cDNA sequencing and analysis"/>
        </authorList>
    </citation>
    <scope>NUCLEOTIDE SEQUENCE [LARGE SCALE MRNA]</scope>
    <source>
        <tissue>Testis</tissue>
    </source>
</reference>
<dbReference type="EMBL" id="AB125204">
    <property type="protein sequence ID" value="BAD51992.1"/>
    <property type="molecule type" value="mRNA"/>
</dbReference>
<dbReference type="EMBL" id="AB168246">
    <property type="protein sequence ID" value="BAE00371.1"/>
    <property type="molecule type" value="mRNA"/>
</dbReference>
<dbReference type="RefSeq" id="NP_001270670.1">
    <property type="nucleotide sequence ID" value="NM_001283741.1"/>
</dbReference>
<dbReference type="RefSeq" id="XP_005565111.1">
    <property type="nucleotide sequence ID" value="XM_005565054.2"/>
</dbReference>
<dbReference type="RefSeq" id="XP_005565112.1">
    <property type="nucleotide sequence ID" value="XM_005565055.2"/>
</dbReference>
<dbReference type="RefSeq" id="XP_005565114.1">
    <property type="nucleotide sequence ID" value="XM_005565057.2"/>
</dbReference>
<dbReference type="RefSeq" id="XP_005565115.1">
    <property type="nucleotide sequence ID" value="XM_005565058.2"/>
</dbReference>
<dbReference type="RefSeq" id="XP_005565116.1">
    <property type="nucleotide sequence ID" value="XM_005565059.2"/>
</dbReference>
<dbReference type="RefSeq" id="XP_005565117.1">
    <property type="nucleotide sequence ID" value="XM_005565060.2"/>
</dbReference>
<dbReference type="RefSeq" id="XP_005565118.1">
    <property type="nucleotide sequence ID" value="XM_005565061.2"/>
</dbReference>
<dbReference type="RefSeq" id="XP_005565119.1">
    <property type="nucleotide sequence ID" value="XM_005565062.2"/>
</dbReference>
<dbReference type="RefSeq" id="XP_005565120.1">
    <property type="nucleotide sequence ID" value="XM_005565063.2"/>
</dbReference>
<dbReference type="RefSeq" id="XP_005565121.1">
    <property type="nucleotide sequence ID" value="XM_005565064.2"/>
</dbReference>
<dbReference type="SMR" id="Q60HC3"/>
<dbReference type="STRING" id="9541.ENSMFAP00000012080"/>
<dbReference type="GeneID" id="101867097"/>
<dbReference type="CTD" id="3185"/>
<dbReference type="eggNOG" id="KOG4211">
    <property type="taxonomic scope" value="Eukaryota"/>
</dbReference>
<dbReference type="Proteomes" id="UP000233100">
    <property type="component" value="Unplaced"/>
</dbReference>
<dbReference type="GO" id="GO:0005654">
    <property type="term" value="C:nucleoplasm"/>
    <property type="evidence" value="ECO:0007669"/>
    <property type="project" value="UniProtKB-SubCell"/>
</dbReference>
<dbReference type="GO" id="GO:0005681">
    <property type="term" value="C:spliceosomal complex"/>
    <property type="evidence" value="ECO:0007669"/>
    <property type="project" value="UniProtKB-KW"/>
</dbReference>
<dbReference type="GO" id="GO:0003727">
    <property type="term" value="F:single-stranded RNA binding"/>
    <property type="evidence" value="ECO:0000250"/>
    <property type="project" value="UniProtKB"/>
</dbReference>
<dbReference type="GO" id="GO:0006397">
    <property type="term" value="P:mRNA processing"/>
    <property type="evidence" value="ECO:0007669"/>
    <property type="project" value="UniProtKB-KW"/>
</dbReference>
<dbReference type="GO" id="GO:0043484">
    <property type="term" value="P:regulation of RNA splicing"/>
    <property type="evidence" value="ECO:0000250"/>
    <property type="project" value="UniProtKB"/>
</dbReference>
<dbReference type="GO" id="GO:0008380">
    <property type="term" value="P:RNA splicing"/>
    <property type="evidence" value="ECO:0007669"/>
    <property type="project" value="UniProtKB-KW"/>
</dbReference>
<dbReference type="CDD" id="cd12729">
    <property type="entry name" value="RRM1_hnRNPH_hnRNPH2_hnRNPF"/>
    <property type="match status" value="1"/>
</dbReference>
<dbReference type="CDD" id="cd12731">
    <property type="entry name" value="RRM2_hnRNPH_hnRNPH2_hnRNPF"/>
    <property type="match status" value="1"/>
</dbReference>
<dbReference type="CDD" id="cd12506">
    <property type="entry name" value="RRM3_hnRNPH_CRSF1_like"/>
    <property type="match status" value="1"/>
</dbReference>
<dbReference type="FunFam" id="3.30.70.330:FF:000071">
    <property type="entry name" value="heterogeneous nuclear ribonucleoprotein H isoform X1"/>
    <property type="match status" value="1"/>
</dbReference>
<dbReference type="FunFam" id="3.30.70.330:FF:000075">
    <property type="entry name" value="Heterogeneous nuclear ribonucleoprotein H1 (H)"/>
    <property type="match status" value="1"/>
</dbReference>
<dbReference type="FunFam" id="3.30.70.330:FF:000031">
    <property type="entry name" value="Heterogeneous nuclear ribonucleoprotein h3 isoform"/>
    <property type="match status" value="1"/>
</dbReference>
<dbReference type="Gene3D" id="3.30.70.330">
    <property type="match status" value="3"/>
</dbReference>
<dbReference type="InterPro" id="IPR050666">
    <property type="entry name" value="ESRP"/>
</dbReference>
<dbReference type="InterPro" id="IPR012677">
    <property type="entry name" value="Nucleotide-bd_a/b_plait_sf"/>
</dbReference>
<dbReference type="InterPro" id="IPR035979">
    <property type="entry name" value="RBD_domain_sf"/>
</dbReference>
<dbReference type="InterPro" id="IPR000504">
    <property type="entry name" value="RRM_dom"/>
</dbReference>
<dbReference type="InterPro" id="IPR012996">
    <property type="entry name" value="Znf_CHHC"/>
</dbReference>
<dbReference type="PANTHER" id="PTHR13976">
    <property type="entry name" value="HETEROGENEOUS NUCLEAR RIBONUCLEOPROTEIN-RELATED"/>
    <property type="match status" value="1"/>
</dbReference>
<dbReference type="Pfam" id="PF00076">
    <property type="entry name" value="RRM_1"/>
    <property type="match status" value="2"/>
</dbReference>
<dbReference type="Pfam" id="PF08080">
    <property type="entry name" value="zf-RNPHF"/>
    <property type="match status" value="1"/>
</dbReference>
<dbReference type="SMART" id="SM00360">
    <property type="entry name" value="RRM"/>
    <property type="match status" value="3"/>
</dbReference>
<dbReference type="SUPFAM" id="SSF54928">
    <property type="entry name" value="RNA-binding domain, RBD"/>
    <property type="match status" value="3"/>
</dbReference>
<dbReference type="PROSITE" id="PS50102">
    <property type="entry name" value="RRM"/>
    <property type="match status" value="2"/>
</dbReference>